<organism>
    <name type="scientific">Aliivibrio fischeri (strain MJ11)</name>
    <name type="common">Vibrio fischeri</name>
    <dbReference type="NCBI Taxonomy" id="388396"/>
    <lineage>
        <taxon>Bacteria</taxon>
        <taxon>Pseudomonadati</taxon>
        <taxon>Pseudomonadota</taxon>
        <taxon>Gammaproteobacteria</taxon>
        <taxon>Vibrionales</taxon>
        <taxon>Vibrionaceae</taxon>
        <taxon>Aliivibrio</taxon>
    </lineage>
</organism>
<sequence>MATPRKPNRRDEILQALAEMLESNEGAARITTAKLAKQVGVSEAALYRHFPSKAKMFEGLIEFIEESIFSRVNRILEDEKDTLKRIELLLKLLLAFAERNPGLTRIMTGHALMFENERLRSRINQIFERIELQFKQILRERKLREGKAFPIDESILAAQLVGQVEGSFCRFVRSDFKYQPTENFNEYWALLSAQIQ</sequence>
<reference key="1">
    <citation type="submission" date="2008-08" db="EMBL/GenBank/DDBJ databases">
        <title>Complete sequence of Vibrio fischeri strain MJ11.</title>
        <authorList>
            <person name="Mandel M.J."/>
            <person name="Stabb E.V."/>
            <person name="Ruby E.G."/>
            <person name="Ferriera S."/>
            <person name="Johnson J."/>
            <person name="Kravitz S."/>
            <person name="Beeson K."/>
            <person name="Sutton G."/>
            <person name="Rogers Y.-H."/>
            <person name="Friedman R."/>
            <person name="Frazier M."/>
            <person name="Venter J.C."/>
        </authorList>
    </citation>
    <scope>NUCLEOTIDE SEQUENCE [LARGE SCALE GENOMIC DNA]</scope>
    <source>
        <strain>MJ11</strain>
    </source>
</reference>
<proteinExistence type="inferred from homology"/>
<name>SLMA_ALIFM</name>
<protein>
    <recommendedName>
        <fullName evidence="1">Nucleoid occlusion factor SlmA</fullName>
    </recommendedName>
</protein>
<dbReference type="EMBL" id="CP001139">
    <property type="protein sequence ID" value="ACH64955.1"/>
    <property type="molecule type" value="Genomic_DNA"/>
</dbReference>
<dbReference type="RefSeq" id="WP_005417043.1">
    <property type="nucleotide sequence ID" value="NC_011184.1"/>
</dbReference>
<dbReference type="SMR" id="B5FFF4"/>
<dbReference type="GeneID" id="54162750"/>
<dbReference type="KEGG" id="vfm:VFMJ11_0121"/>
<dbReference type="HOGENOM" id="CLU_069356_5_0_6"/>
<dbReference type="Proteomes" id="UP000001857">
    <property type="component" value="Chromosome I"/>
</dbReference>
<dbReference type="GO" id="GO:0043590">
    <property type="term" value="C:bacterial nucleoid"/>
    <property type="evidence" value="ECO:0007669"/>
    <property type="project" value="UniProtKB-UniRule"/>
</dbReference>
<dbReference type="GO" id="GO:0005737">
    <property type="term" value="C:cytoplasm"/>
    <property type="evidence" value="ECO:0007669"/>
    <property type="project" value="UniProtKB-UniRule"/>
</dbReference>
<dbReference type="GO" id="GO:0003700">
    <property type="term" value="F:DNA-binding transcription factor activity"/>
    <property type="evidence" value="ECO:0007669"/>
    <property type="project" value="TreeGrafter"/>
</dbReference>
<dbReference type="GO" id="GO:0000976">
    <property type="term" value="F:transcription cis-regulatory region binding"/>
    <property type="evidence" value="ECO:0007669"/>
    <property type="project" value="TreeGrafter"/>
</dbReference>
<dbReference type="GO" id="GO:0051301">
    <property type="term" value="P:cell division"/>
    <property type="evidence" value="ECO:0007669"/>
    <property type="project" value="UniProtKB-KW"/>
</dbReference>
<dbReference type="GO" id="GO:0010974">
    <property type="term" value="P:negative regulation of division septum assembly"/>
    <property type="evidence" value="ECO:0007669"/>
    <property type="project" value="InterPro"/>
</dbReference>
<dbReference type="Gene3D" id="1.10.357.10">
    <property type="entry name" value="Tetracycline Repressor, domain 2"/>
    <property type="match status" value="1"/>
</dbReference>
<dbReference type="HAMAP" id="MF_01839">
    <property type="entry name" value="NO_factor_SlmA"/>
    <property type="match status" value="1"/>
</dbReference>
<dbReference type="InterPro" id="IPR009057">
    <property type="entry name" value="Homeodomain-like_sf"/>
</dbReference>
<dbReference type="InterPro" id="IPR050109">
    <property type="entry name" value="HTH-type_TetR-like_transc_reg"/>
</dbReference>
<dbReference type="InterPro" id="IPR001647">
    <property type="entry name" value="HTH_TetR"/>
</dbReference>
<dbReference type="InterPro" id="IPR023769">
    <property type="entry name" value="NO_SlmA"/>
</dbReference>
<dbReference type="InterPro" id="IPR054580">
    <property type="entry name" value="SlmA-like_C"/>
</dbReference>
<dbReference type="InterPro" id="IPR036271">
    <property type="entry name" value="Tet_transcr_reg_TetR-rel_C_sf"/>
</dbReference>
<dbReference type="NCBIfam" id="NF007015">
    <property type="entry name" value="PRK09480.1"/>
    <property type="match status" value="1"/>
</dbReference>
<dbReference type="PANTHER" id="PTHR30055">
    <property type="entry name" value="HTH-TYPE TRANSCRIPTIONAL REGULATOR RUTR"/>
    <property type="match status" value="1"/>
</dbReference>
<dbReference type="PANTHER" id="PTHR30055:SF183">
    <property type="entry name" value="NUCLEOID OCCLUSION FACTOR SLMA"/>
    <property type="match status" value="1"/>
</dbReference>
<dbReference type="Pfam" id="PF22276">
    <property type="entry name" value="SlmA-like_C"/>
    <property type="match status" value="1"/>
</dbReference>
<dbReference type="Pfam" id="PF00440">
    <property type="entry name" value="TetR_N"/>
    <property type="match status" value="1"/>
</dbReference>
<dbReference type="SUPFAM" id="SSF46689">
    <property type="entry name" value="Homeodomain-like"/>
    <property type="match status" value="1"/>
</dbReference>
<dbReference type="SUPFAM" id="SSF48498">
    <property type="entry name" value="Tetracyclin repressor-like, C-terminal domain"/>
    <property type="match status" value="1"/>
</dbReference>
<dbReference type="PROSITE" id="PS50977">
    <property type="entry name" value="HTH_TETR_2"/>
    <property type="match status" value="1"/>
</dbReference>
<accession>B5FFF4</accession>
<feature type="chain" id="PRO_1000188406" description="Nucleoid occlusion factor SlmA">
    <location>
        <begin position="1"/>
        <end position="196"/>
    </location>
</feature>
<feature type="domain" description="HTH tetR-type" evidence="1">
    <location>
        <begin position="7"/>
        <end position="68"/>
    </location>
</feature>
<feature type="DNA-binding region" description="H-T-H motif" evidence="1">
    <location>
        <begin position="31"/>
        <end position="50"/>
    </location>
</feature>
<feature type="coiled-coil region" evidence="1">
    <location>
        <begin position="71"/>
        <end position="93"/>
    </location>
</feature>
<keyword id="KW-0131">Cell cycle</keyword>
<keyword id="KW-0132">Cell division</keyword>
<keyword id="KW-0175">Coiled coil</keyword>
<keyword id="KW-0963">Cytoplasm</keyword>
<keyword id="KW-0238">DNA-binding</keyword>
<evidence type="ECO:0000255" key="1">
    <source>
        <dbReference type="HAMAP-Rule" id="MF_01839"/>
    </source>
</evidence>
<comment type="function">
    <text evidence="1">Required for nucleoid occlusion (NO) phenomenon, which prevents Z-ring formation and cell division over the nucleoid. Acts as a DNA-associated cell division inhibitor that binds simultaneously chromosomal DNA and FtsZ, and disrupts the assembly of FtsZ polymers. SlmA-DNA-binding sequences (SBS) are dispersed on non-Ter regions of the chromosome, preventing FtsZ polymerization at these regions.</text>
</comment>
<comment type="subunit">
    <text evidence="1">Homodimer. Interacts with FtsZ.</text>
</comment>
<comment type="subcellular location">
    <subcellularLocation>
        <location evidence="1">Cytoplasm</location>
        <location evidence="1">Nucleoid</location>
    </subcellularLocation>
</comment>
<comment type="similarity">
    <text evidence="1">Belongs to the nucleoid occlusion factor SlmA family.</text>
</comment>
<gene>
    <name evidence="1" type="primary">slmA</name>
    <name type="ordered locus">VFMJ11_0121</name>
</gene>